<sequence>MPRVKRGVTARARHKKVLALAKGFRGRRGNVYRVAKEAVMKAGQYAYRDRRTKKRVFRQLWIARINAAARQCGMTYSQFANGLKKANIEIDRKVLSDIAVHDMAAFASIVDQVKAKLAA</sequence>
<feature type="chain" id="PRO_0000243724" description="Large ribosomal subunit protein bL20">
    <location>
        <begin position="1"/>
        <end position="119"/>
    </location>
</feature>
<proteinExistence type="inferred from homology"/>
<reference key="1">
    <citation type="submission" date="2006-02" db="EMBL/GenBank/DDBJ databases">
        <title>Complete sequence of chromosome of Rhodoferax ferrireducens DSM 15236.</title>
        <authorList>
            <person name="Copeland A."/>
            <person name="Lucas S."/>
            <person name="Lapidus A."/>
            <person name="Barry K."/>
            <person name="Detter J.C."/>
            <person name="Glavina del Rio T."/>
            <person name="Hammon N."/>
            <person name="Israni S."/>
            <person name="Pitluck S."/>
            <person name="Brettin T."/>
            <person name="Bruce D."/>
            <person name="Han C."/>
            <person name="Tapia R."/>
            <person name="Gilna P."/>
            <person name="Kiss H."/>
            <person name="Schmutz J."/>
            <person name="Larimer F."/>
            <person name="Land M."/>
            <person name="Kyrpides N."/>
            <person name="Ivanova N."/>
            <person name="Richardson P."/>
        </authorList>
    </citation>
    <scope>NUCLEOTIDE SEQUENCE [LARGE SCALE GENOMIC DNA]</scope>
    <source>
        <strain>ATCC BAA-621 / DSM 15236 / T118</strain>
    </source>
</reference>
<protein>
    <recommendedName>
        <fullName evidence="1">Large ribosomal subunit protein bL20</fullName>
    </recommendedName>
    <alternativeName>
        <fullName evidence="2">50S ribosomal protein L20</fullName>
    </alternativeName>
</protein>
<comment type="function">
    <text evidence="1">Binds directly to 23S ribosomal RNA and is necessary for the in vitro assembly process of the 50S ribosomal subunit. It is not involved in the protein synthesizing functions of that subunit.</text>
</comment>
<comment type="similarity">
    <text evidence="1">Belongs to the bacterial ribosomal protein bL20 family.</text>
</comment>
<name>RL20_ALBFT</name>
<keyword id="KW-1185">Reference proteome</keyword>
<keyword id="KW-0687">Ribonucleoprotein</keyword>
<keyword id="KW-0689">Ribosomal protein</keyword>
<keyword id="KW-0694">RNA-binding</keyword>
<keyword id="KW-0699">rRNA-binding</keyword>
<gene>
    <name evidence="1" type="primary">rplT</name>
    <name type="ordered locus">Rfer_1339</name>
</gene>
<evidence type="ECO:0000255" key="1">
    <source>
        <dbReference type="HAMAP-Rule" id="MF_00382"/>
    </source>
</evidence>
<evidence type="ECO:0000305" key="2"/>
<accession>Q21YT0</accession>
<dbReference type="EMBL" id="CP000267">
    <property type="protein sequence ID" value="ABD69073.1"/>
    <property type="molecule type" value="Genomic_DNA"/>
</dbReference>
<dbReference type="RefSeq" id="WP_011463641.1">
    <property type="nucleotide sequence ID" value="NC_007908.1"/>
</dbReference>
<dbReference type="SMR" id="Q21YT0"/>
<dbReference type="STRING" id="338969.Rfer_1339"/>
<dbReference type="KEGG" id="rfr:Rfer_1339"/>
<dbReference type="eggNOG" id="COG0292">
    <property type="taxonomic scope" value="Bacteria"/>
</dbReference>
<dbReference type="HOGENOM" id="CLU_123265_0_1_4"/>
<dbReference type="OrthoDB" id="9808966at2"/>
<dbReference type="Proteomes" id="UP000008332">
    <property type="component" value="Chromosome"/>
</dbReference>
<dbReference type="GO" id="GO:1990904">
    <property type="term" value="C:ribonucleoprotein complex"/>
    <property type="evidence" value="ECO:0007669"/>
    <property type="project" value="UniProtKB-KW"/>
</dbReference>
<dbReference type="GO" id="GO:0005840">
    <property type="term" value="C:ribosome"/>
    <property type="evidence" value="ECO:0007669"/>
    <property type="project" value="UniProtKB-KW"/>
</dbReference>
<dbReference type="GO" id="GO:0019843">
    <property type="term" value="F:rRNA binding"/>
    <property type="evidence" value="ECO:0007669"/>
    <property type="project" value="UniProtKB-UniRule"/>
</dbReference>
<dbReference type="GO" id="GO:0003735">
    <property type="term" value="F:structural constituent of ribosome"/>
    <property type="evidence" value="ECO:0007669"/>
    <property type="project" value="InterPro"/>
</dbReference>
<dbReference type="GO" id="GO:0000027">
    <property type="term" value="P:ribosomal large subunit assembly"/>
    <property type="evidence" value="ECO:0007669"/>
    <property type="project" value="UniProtKB-UniRule"/>
</dbReference>
<dbReference type="GO" id="GO:0006412">
    <property type="term" value="P:translation"/>
    <property type="evidence" value="ECO:0007669"/>
    <property type="project" value="InterPro"/>
</dbReference>
<dbReference type="CDD" id="cd07026">
    <property type="entry name" value="Ribosomal_L20"/>
    <property type="match status" value="1"/>
</dbReference>
<dbReference type="FunFam" id="1.10.1900.20:FF:000001">
    <property type="entry name" value="50S ribosomal protein L20"/>
    <property type="match status" value="1"/>
</dbReference>
<dbReference type="Gene3D" id="6.10.160.10">
    <property type="match status" value="1"/>
</dbReference>
<dbReference type="Gene3D" id="1.10.1900.20">
    <property type="entry name" value="Ribosomal protein L20"/>
    <property type="match status" value="1"/>
</dbReference>
<dbReference type="HAMAP" id="MF_00382">
    <property type="entry name" value="Ribosomal_bL20"/>
    <property type="match status" value="1"/>
</dbReference>
<dbReference type="InterPro" id="IPR005813">
    <property type="entry name" value="Ribosomal_bL20"/>
</dbReference>
<dbReference type="InterPro" id="IPR049946">
    <property type="entry name" value="RIBOSOMAL_L20_CS"/>
</dbReference>
<dbReference type="InterPro" id="IPR035566">
    <property type="entry name" value="Ribosomal_protein_bL20_C"/>
</dbReference>
<dbReference type="NCBIfam" id="TIGR01032">
    <property type="entry name" value="rplT_bact"/>
    <property type="match status" value="1"/>
</dbReference>
<dbReference type="PANTHER" id="PTHR10986">
    <property type="entry name" value="39S RIBOSOMAL PROTEIN L20"/>
    <property type="match status" value="1"/>
</dbReference>
<dbReference type="Pfam" id="PF00453">
    <property type="entry name" value="Ribosomal_L20"/>
    <property type="match status" value="1"/>
</dbReference>
<dbReference type="PRINTS" id="PR00062">
    <property type="entry name" value="RIBOSOMALL20"/>
</dbReference>
<dbReference type="SUPFAM" id="SSF74731">
    <property type="entry name" value="Ribosomal protein L20"/>
    <property type="match status" value="1"/>
</dbReference>
<dbReference type="PROSITE" id="PS00937">
    <property type="entry name" value="RIBOSOMAL_L20"/>
    <property type="match status" value="1"/>
</dbReference>
<organism>
    <name type="scientific">Albidiferax ferrireducens (strain ATCC BAA-621 / DSM 15236 / T118)</name>
    <name type="common">Rhodoferax ferrireducens</name>
    <dbReference type="NCBI Taxonomy" id="338969"/>
    <lineage>
        <taxon>Bacteria</taxon>
        <taxon>Pseudomonadati</taxon>
        <taxon>Pseudomonadota</taxon>
        <taxon>Betaproteobacteria</taxon>
        <taxon>Burkholderiales</taxon>
        <taxon>Comamonadaceae</taxon>
        <taxon>Rhodoferax</taxon>
    </lineage>
</organism>